<protein>
    <recommendedName>
        <fullName evidence="3">Ubiquitin-ribosomal protein eL40 fusion protein</fullName>
    </recommendedName>
    <component>
        <recommendedName>
            <fullName>Ubiquitin</fullName>
        </recommendedName>
    </component>
    <component>
        <recommendedName>
            <fullName evidence="3">Large ribosomal subunit protein eL40</fullName>
        </recommendedName>
        <alternativeName>
            <fullName>60S ribosomal protein L40</fullName>
        </alternativeName>
    </component>
</protein>
<gene>
    <name type="primary">RPL40</name>
</gene>
<reference key="1">
    <citation type="submission" date="2007-08" db="EMBL/GenBank/DDBJ databases">
        <title>cDNA library made from Tetrahymena thermophila cells.</title>
        <authorList>
            <person name="Coyne R.S."/>
            <person name="Thiagarajan M."/>
            <person name="Eisen J.A."/>
            <person name="Methe B."/>
        </authorList>
    </citation>
    <scope>NUCLEOTIDE SEQUENCE [LARGE SCALE MRNA]</scope>
    <source>
        <strain>SB210</strain>
    </source>
</reference>
<organism>
    <name type="scientific">Tetrahymena thermophila (strain SB210)</name>
    <dbReference type="NCBI Taxonomy" id="312017"/>
    <lineage>
        <taxon>Eukaryota</taxon>
        <taxon>Sar</taxon>
        <taxon>Alveolata</taxon>
        <taxon>Ciliophora</taxon>
        <taxon>Intramacronucleata</taxon>
        <taxon>Oligohymenophorea</taxon>
        <taxon>Hymenostomatida</taxon>
        <taxon>Tetrahymenina</taxon>
        <taxon>Tetrahymenidae</taxon>
        <taxon>Tetrahymena</taxon>
    </lineage>
</organism>
<dbReference type="EMBL" id="EV837889">
    <property type="status" value="NOT_ANNOTATED_CDS"/>
    <property type="molecule type" value="mRNA"/>
</dbReference>
<dbReference type="PDB" id="4ADX">
    <property type="method" value="EM"/>
    <property type="resolution" value="6.60 A"/>
    <property type="chains" value="5=1-129"/>
</dbReference>
<dbReference type="PDB" id="4V8P">
    <property type="method" value="X-ray"/>
    <property type="resolution" value="3.52 A"/>
    <property type="chains" value="AK/DK/FK/HK=1-129"/>
</dbReference>
<dbReference type="PDBsum" id="4ADX"/>
<dbReference type="PDBsum" id="4V8P"/>
<dbReference type="SMR" id="P0DJ25"/>
<dbReference type="IntAct" id="P0DJ25">
    <property type="interactions" value="1"/>
</dbReference>
<dbReference type="eggNOG" id="KOG0003">
    <property type="taxonomic scope" value="Eukaryota"/>
</dbReference>
<dbReference type="EvolutionaryTrace" id="P0DJ25"/>
<dbReference type="GO" id="GO:0005737">
    <property type="term" value="C:cytoplasm"/>
    <property type="evidence" value="ECO:0007669"/>
    <property type="project" value="UniProtKB-SubCell"/>
</dbReference>
<dbReference type="GO" id="GO:0005634">
    <property type="term" value="C:nucleus"/>
    <property type="evidence" value="ECO:0007669"/>
    <property type="project" value="UniProtKB-SubCell"/>
</dbReference>
<dbReference type="GO" id="GO:1990904">
    <property type="term" value="C:ribonucleoprotein complex"/>
    <property type="evidence" value="ECO:0007669"/>
    <property type="project" value="UniProtKB-KW"/>
</dbReference>
<dbReference type="GO" id="GO:0005840">
    <property type="term" value="C:ribosome"/>
    <property type="evidence" value="ECO:0007669"/>
    <property type="project" value="UniProtKB-KW"/>
</dbReference>
<dbReference type="GO" id="GO:0003735">
    <property type="term" value="F:structural constituent of ribosome"/>
    <property type="evidence" value="ECO:0007669"/>
    <property type="project" value="InterPro"/>
</dbReference>
<dbReference type="GO" id="GO:0006412">
    <property type="term" value="P:translation"/>
    <property type="evidence" value="ECO:0007669"/>
    <property type="project" value="InterPro"/>
</dbReference>
<dbReference type="CDD" id="cd01803">
    <property type="entry name" value="Ubl_ubiquitin"/>
    <property type="match status" value="1"/>
</dbReference>
<dbReference type="FunFam" id="3.10.20.90:FF:000158">
    <property type="entry name" value="Polyubiquitin 5"/>
    <property type="match status" value="1"/>
</dbReference>
<dbReference type="FunFam" id="4.10.1060.50:FF:000001">
    <property type="entry name" value="ubiquitin-60S ribosomal protein L40"/>
    <property type="match status" value="1"/>
</dbReference>
<dbReference type="Gene3D" id="4.10.1060.50">
    <property type="match status" value="1"/>
</dbReference>
<dbReference type="Gene3D" id="3.10.20.90">
    <property type="entry name" value="Phosphatidylinositol 3-kinase Catalytic Subunit, Chain A, domain 1"/>
    <property type="match status" value="1"/>
</dbReference>
<dbReference type="InterPro" id="IPR001975">
    <property type="entry name" value="Ribosomal_eL40_dom"/>
</dbReference>
<dbReference type="InterPro" id="IPR038587">
    <property type="entry name" value="Ribosomal_eL40_sf"/>
</dbReference>
<dbReference type="InterPro" id="IPR011332">
    <property type="entry name" value="Ribosomal_zn-bd"/>
</dbReference>
<dbReference type="InterPro" id="IPR000626">
    <property type="entry name" value="Ubiquitin-like_dom"/>
</dbReference>
<dbReference type="InterPro" id="IPR029071">
    <property type="entry name" value="Ubiquitin-like_domsf"/>
</dbReference>
<dbReference type="InterPro" id="IPR019954">
    <property type="entry name" value="Ubiquitin_CS"/>
</dbReference>
<dbReference type="InterPro" id="IPR019956">
    <property type="entry name" value="Ubiquitin_dom"/>
</dbReference>
<dbReference type="InterPro" id="IPR050158">
    <property type="entry name" value="Ubiquitin_ubiquitin-like"/>
</dbReference>
<dbReference type="PANTHER" id="PTHR10666">
    <property type="entry name" value="UBIQUITIN"/>
    <property type="match status" value="1"/>
</dbReference>
<dbReference type="Pfam" id="PF01020">
    <property type="entry name" value="Ribosomal_L40e"/>
    <property type="match status" value="1"/>
</dbReference>
<dbReference type="Pfam" id="PF00240">
    <property type="entry name" value="ubiquitin"/>
    <property type="match status" value="1"/>
</dbReference>
<dbReference type="PRINTS" id="PR00348">
    <property type="entry name" value="UBIQUITIN"/>
</dbReference>
<dbReference type="SMART" id="SM01377">
    <property type="entry name" value="Ribosomal_L40e"/>
    <property type="match status" value="1"/>
</dbReference>
<dbReference type="SMART" id="SM00213">
    <property type="entry name" value="UBQ"/>
    <property type="match status" value="1"/>
</dbReference>
<dbReference type="SUPFAM" id="SSF54236">
    <property type="entry name" value="Ubiquitin-like"/>
    <property type="match status" value="1"/>
</dbReference>
<dbReference type="SUPFAM" id="SSF57829">
    <property type="entry name" value="Zn-binding ribosomal proteins"/>
    <property type="match status" value="1"/>
</dbReference>
<dbReference type="PROSITE" id="PS00299">
    <property type="entry name" value="UBIQUITIN_1"/>
    <property type="match status" value="1"/>
</dbReference>
<dbReference type="PROSITE" id="PS50053">
    <property type="entry name" value="UBIQUITIN_2"/>
    <property type="match status" value="1"/>
</dbReference>
<name>RL40_TETTS</name>
<accession>P0DJ25</accession>
<sequence>MQIFVKTLTGKTITLDVEASDTIENVKAKIQDKEGIPPDQQRLIFAGKQLEDGRTLSDYNIQKESTLHLVLRLRGGGMEPTIAALAKKYNCEKKVCRDCYARLPPKATNCRKRKCGHSNSLRLKKKPKE</sequence>
<feature type="chain" id="PRO_0000413524" description="Ubiquitin">
    <location>
        <begin position="1"/>
        <end position="76"/>
    </location>
</feature>
<feature type="chain" id="PRO_0000413525" description="Large ribosomal subunit protein eL40">
    <location>
        <begin position="77"/>
        <end position="129"/>
    </location>
</feature>
<feature type="domain" description="Ubiquitin-like" evidence="2">
    <location>
        <begin position="1"/>
        <end position="76"/>
    </location>
</feature>
<feature type="cross-link" description="Glycyl lysine isopeptide (Lys-Gly) (interchain with G-Cter in ubiquitin)" evidence="1">
    <location>
        <position position="48"/>
    </location>
</feature>
<feature type="cross-link" description="Glycyl lysine isopeptide (Gly-Lys) (interchain with K-? in acceptor proteins)" evidence="2">
    <location>
        <position position="76"/>
    </location>
</feature>
<comment type="function">
    <molecule>Ubiquitin</molecule>
    <text evidence="1">Exists either covalently attached to another protein, or free (unanchored). When covalently bound, it is conjugated to target proteins via an isopeptide bond either as a monomer (monoubiquitin), a polymer linked via different Lys residues of the ubiquitin (polyubiquitin chains) or a linear polymer linked via the initiator Met of the ubiquitin (linear polyubiquitin chains). Polyubiquitin chains, when attached to a target protein, have different functions depending on the Lys residue of the ubiquitin that is linked: Lys-48-linked is involved in protein degradation via the proteasome. Linear polymer chains formed via attachment by the initiator Met lead to cell signaling. Ubiquitin is usually conjugated to Lys residues of target proteins, however, in rare cases, conjugation to Cys or Ser residues has been observed. When polyubiquitin is free (unanchored-polyubiquitin), it also has distinct roles, such as in activation of protein kinases, and in signaling (By similarity).</text>
</comment>
<comment type="function">
    <molecule>Large ribosomal subunit protein eL40</molecule>
    <text evidence="1">Component of the 60S subunit of the ribosome.</text>
</comment>
<comment type="subunit">
    <molecule>Large ribosomal subunit protein eL40</molecule>
    <text evidence="1">Part of the 60S ribosomal subunit.</text>
</comment>
<comment type="subcellular location">
    <molecule>Ubiquitin</molecule>
    <subcellularLocation>
        <location evidence="1">Cytoplasm</location>
    </subcellularLocation>
    <subcellularLocation>
        <location evidence="1">Nucleus</location>
    </subcellularLocation>
</comment>
<comment type="subcellular location">
    <molecule>Large ribosomal subunit protein eL40</molecule>
    <subcellularLocation>
        <location evidence="1">Cytoplasm</location>
    </subcellularLocation>
</comment>
<comment type="miscellaneous">
    <text>Ubiquitin is generally synthesized as a polyubiquitin precursor. Some ubiquitin genes contain a single copy of ubiquitin fused to a ribosomal protein.</text>
</comment>
<comment type="similarity">
    <text evidence="3">In the N-terminal section; belongs to the ubiquitin family.</text>
</comment>
<comment type="similarity">
    <text evidence="3">In the C-terminal section; belongs to the eukaryotic ribosomal protein eL40 family.</text>
</comment>
<keyword id="KW-0002">3D-structure</keyword>
<keyword id="KW-0963">Cytoplasm</keyword>
<keyword id="KW-1017">Isopeptide bond</keyword>
<keyword id="KW-0539">Nucleus</keyword>
<keyword id="KW-0687">Ribonucleoprotein</keyword>
<keyword id="KW-0689">Ribosomal protein</keyword>
<keyword id="KW-0832">Ubl conjugation</keyword>
<proteinExistence type="evidence at protein level"/>
<evidence type="ECO:0000250" key="1"/>
<evidence type="ECO:0000255" key="2">
    <source>
        <dbReference type="PROSITE-ProRule" id="PRU00214"/>
    </source>
</evidence>
<evidence type="ECO:0000305" key="3"/>